<evidence type="ECO:0000305" key="1"/>
<name>YEY4_SCHPO</name>
<protein>
    <recommendedName>
        <fullName>UPF0538 protein C2C4.04c</fullName>
    </recommendedName>
</protein>
<proteinExistence type="inferred from homology"/>
<comment type="similarity">
    <text evidence="1">Belongs to the UPF0538 family.</text>
</comment>
<dbReference type="EMBL" id="CU329670">
    <property type="protein sequence ID" value="CAB16364.1"/>
    <property type="molecule type" value="Genomic_DNA"/>
</dbReference>
<dbReference type="PIR" id="T38515">
    <property type="entry name" value="T38515"/>
</dbReference>
<dbReference type="BioGRID" id="278916">
    <property type="interactions" value="2"/>
</dbReference>
<dbReference type="FunCoup" id="O14037">
    <property type="interactions" value="21"/>
</dbReference>
<dbReference type="iPTMnet" id="O14037"/>
<dbReference type="PaxDb" id="4896-SPAC2C4.04c.1"/>
<dbReference type="EnsemblFungi" id="SPAC2C4.04c.1">
    <property type="protein sequence ID" value="SPAC2C4.04c.1:pep"/>
    <property type="gene ID" value="SPAC2C4.04c"/>
</dbReference>
<dbReference type="KEGG" id="spo:2542455"/>
<dbReference type="PomBase" id="SPAC2C4.04c"/>
<dbReference type="VEuPathDB" id="FungiDB:SPAC2C4.04c"/>
<dbReference type="eggNOG" id="KOG4147">
    <property type="taxonomic scope" value="Eukaryota"/>
</dbReference>
<dbReference type="HOGENOM" id="CLU_117792_0_0_1"/>
<dbReference type="InParanoid" id="O14037"/>
<dbReference type="OMA" id="YRNVKNH"/>
<dbReference type="PhylomeDB" id="O14037"/>
<dbReference type="PRO" id="PR:O14037"/>
<dbReference type="Proteomes" id="UP000002485">
    <property type="component" value="Chromosome I"/>
</dbReference>
<dbReference type="GO" id="GO:0005829">
    <property type="term" value="C:cytosol"/>
    <property type="evidence" value="ECO:0007005"/>
    <property type="project" value="PomBase"/>
</dbReference>
<dbReference type="GO" id="GO:0005634">
    <property type="term" value="C:nucleus"/>
    <property type="evidence" value="ECO:0007005"/>
    <property type="project" value="PomBase"/>
</dbReference>
<dbReference type="GO" id="GO:0006458">
    <property type="term" value="P:'de novo' protein folding"/>
    <property type="evidence" value="ECO:0000303"/>
    <property type="project" value="PomBase"/>
</dbReference>
<dbReference type="InterPro" id="IPR018794">
    <property type="entry name" value="UPF0538"/>
</dbReference>
<dbReference type="PANTHER" id="PTHR18444">
    <property type="entry name" value="UPF0538 FAMILY MEMBER"/>
    <property type="match status" value="1"/>
</dbReference>
<dbReference type="PANTHER" id="PTHR18444:SF9">
    <property type="entry name" value="UPF0538 PROTEIN C2ORF76"/>
    <property type="match status" value="1"/>
</dbReference>
<dbReference type="Pfam" id="PF10209">
    <property type="entry name" value="DUF2340"/>
    <property type="match status" value="1"/>
</dbReference>
<organism>
    <name type="scientific">Schizosaccharomyces pombe (strain 972 / ATCC 24843)</name>
    <name type="common">Fission yeast</name>
    <dbReference type="NCBI Taxonomy" id="284812"/>
    <lineage>
        <taxon>Eukaryota</taxon>
        <taxon>Fungi</taxon>
        <taxon>Dikarya</taxon>
        <taxon>Ascomycota</taxon>
        <taxon>Taphrinomycotina</taxon>
        <taxon>Schizosaccharomycetes</taxon>
        <taxon>Schizosaccharomycetales</taxon>
        <taxon>Schizosaccharomycetaceae</taxon>
        <taxon>Schizosaccharomyces</taxon>
    </lineage>
</organism>
<accession>O14037</accession>
<gene>
    <name type="ORF">SPAC2C4.04c</name>
</gene>
<reference key="1">
    <citation type="journal article" date="2002" name="Nature">
        <title>The genome sequence of Schizosaccharomyces pombe.</title>
        <authorList>
            <person name="Wood V."/>
            <person name="Gwilliam R."/>
            <person name="Rajandream M.A."/>
            <person name="Lyne M.H."/>
            <person name="Lyne R."/>
            <person name="Stewart A."/>
            <person name="Sgouros J.G."/>
            <person name="Peat N."/>
            <person name="Hayles J."/>
            <person name="Baker S.G."/>
            <person name="Basham D."/>
            <person name="Bowman S."/>
            <person name="Brooks K."/>
            <person name="Brown D."/>
            <person name="Brown S."/>
            <person name="Chillingworth T."/>
            <person name="Churcher C.M."/>
            <person name="Collins M."/>
            <person name="Connor R."/>
            <person name="Cronin A."/>
            <person name="Davis P."/>
            <person name="Feltwell T."/>
            <person name="Fraser A."/>
            <person name="Gentles S."/>
            <person name="Goble A."/>
            <person name="Hamlin N."/>
            <person name="Harris D.E."/>
            <person name="Hidalgo J."/>
            <person name="Hodgson G."/>
            <person name="Holroyd S."/>
            <person name="Hornsby T."/>
            <person name="Howarth S."/>
            <person name="Huckle E.J."/>
            <person name="Hunt S."/>
            <person name="Jagels K."/>
            <person name="James K.D."/>
            <person name="Jones L."/>
            <person name="Jones M."/>
            <person name="Leather S."/>
            <person name="McDonald S."/>
            <person name="McLean J."/>
            <person name="Mooney P."/>
            <person name="Moule S."/>
            <person name="Mungall K.L."/>
            <person name="Murphy L.D."/>
            <person name="Niblett D."/>
            <person name="Odell C."/>
            <person name="Oliver K."/>
            <person name="O'Neil S."/>
            <person name="Pearson D."/>
            <person name="Quail M.A."/>
            <person name="Rabbinowitsch E."/>
            <person name="Rutherford K.M."/>
            <person name="Rutter S."/>
            <person name="Saunders D."/>
            <person name="Seeger K."/>
            <person name="Sharp S."/>
            <person name="Skelton J."/>
            <person name="Simmonds M.N."/>
            <person name="Squares R."/>
            <person name="Squares S."/>
            <person name="Stevens K."/>
            <person name="Taylor K."/>
            <person name="Taylor R.G."/>
            <person name="Tivey A."/>
            <person name="Walsh S.V."/>
            <person name="Warren T."/>
            <person name="Whitehead S."/>
            <person name="Woodward J.R."/>
            <person name="Volckaert G."/>
            <person name="Aert R."/>
            <person name="Robben J."/>
            <person name="Grymonprez B."/>
            <person name="Weltjens I."/>
            <person name="Vanstreels E."/>
            <person name="Rieger M."/>
            <person name="Schaefer M."/>
            <person name="Mueller-Auer S."/>
            <person name="Gabel C."/>
            <person name="Fuchs M."/>
            <person name="Duesterhoeft A."/>
            <person name="Fritzc C."/>
            <person name="Holzer E."/>
            <person name="Moestl D."/>
            <person name="Hilbert H."/>
            <person name="Borzym K."/>
            <person name="Langer I."/>
            <person name="Beck A."/>
            <person name="Lehrach H."/>
            <person name="Reinhardt R."/>
            <person name="Pohl T.M."/>
            <person name="Eger P."/>
            <person name="Zimmermann W."/>
            <person name="Wedler H."/>
            <person name="Wambutt R."/>
            <person name="Purnelle B."/>
            <person name="Goffeau A."/>
            <person name="Cadieu E."/>
            <person name="Dreano S."/>
            <person name="Gloux S."/>
            <person name="Lelaure V."/>
            <person name="Mottier S."/>
            <person name="Galibert F."/>
            <person name="Aves S.J."/>
            <person name="Xiang Z."/>
            <person name="Hunt C."/>
            <person name="Moore K."/>
            <person name="Hurst S.M."/>
            <person name="Lucas M."/>
            <person name="Rochet M."/>
            <person name="Gaillardin C."/>
            <person name="Tallada V.A."/>
            <person name="Garzon A."/>
            <person name="Thode G."/>
            <person name="Daga R.R."/>
            <person name="Cruzado L."/>
            <person name="Jimenez J."/>
            <person name="Sanchez M."/>
            <person name="del Rey F."/>
            <person name="Benito J."/>
            <person name="Dominguez A."/>
            <person name="Revuelta J.L."/>
            <person name="Moreno S."/>
            <person name="Armstrong J."/>
            <person name="Forsburg S.L."/>
            <person name="Cerutti L."/>
            <person name="Lowe T."/>
            <person name="McCombie W.R."/>
            <person name="Paulsen I."/>
            <person name="Potashkin J."/>
            <person name="Shpakovski G.V."/>
            <person name="Ussery D."/>
            <person name="Barrell B.G."/>
            <person name="Nurse P."/>
        </authorList>
    </citation>
    <scope>NUCLEOTIDE SEQUENCE [LARGE SCALE GENOMIC DNA]</scope>
    <source>
        <strain>972 / ATCC 24843</strain>
    </source>
</reference>
<keyword id="KW-1185">Reference proteome</keyword>
<sequence>MTGATLTVRVIRNFEYRTLKNVVFHDIDLATTTVDQFKKIIDERIQTDPSLKIYRTTHFDTLKIYVKAQQHKTQNLAINLDHDDWILNDGAKTLSLCGIENETELSYFELAAYKAYQANPVQKWL</sequence>
<feature type="chain" id="PRO_0000328904" description="UPF0538 protein C2C4.04c">
    <location>
        <begin position="1"/>
        <end position="125"/>
    </location>
</feature>